<organism>
    <name type="scientific">Chrotopterus auritus</name>
    <name type="common">Peters's woolly false vampire bat</name>
    <dbReference type="NCBI Taxonomy" id="148086"/>
    <lineage>
        <taxon>Eukaryota</taxon>
        <taxon>Metazoa</taxon>
        <taxon>Chordata</taxon>
        <taxon>Craniata</taxon>
        <taxon>Vertebrata</taxon>
        <taxon>Euteleostomi</taxon>
        <taxon>Mammalia</taxon>
        <taxon>Eutheria</taxon>
        <taxon>Laurasiatheria</taxon>
        <taxon>Chiroptera</taxon>
        <taxon>Yangochiroptera</taxon>
        <taxon>Phyllostomidae</taxon>
        <taxon>Phyllostominae</taxon>
        <taxon>Chrotopterus</taxon>
    </lineage>
</organism>
<proteinExistence type="inferred from homology"/>
<dbReference type="EC" id="7.1.1.2"/>
<dbReference type="EMBL" id="AY504554">
    <property type="protein sequence ID" value="AAS91419.1"/>
    <property type="molecule type" value="Genomic_DNA"/>
</dbReference>
<dbReference type="SMR" id="Q330D8"/>
<dbReference type="GO" id="GO:0005743">
    <property type="term" value="C:mitochondrial inner membrane"/>
    <property type="evidence" value="ECO:0007669"/>
    <property type="project" value="UniProtKB-SubCell"/>
</dbReference>
<dbReference type="GO" id="GO:0008137">
    <property type="term" value="F:NADH dehydrogenase (ubiquinone) activity"/>
    <property type="evidence" value="ECO:0007669"/>
    <property type="project" value="UniProtKB-EC"/>
</dbReference>
<dbReference type="GO" id="GO:0006120">
    <property type="term" value="P:mitochondrial electron transport, NADH to ubiquinone"/>
    <property type="evidence" value="ECO:0007669"/>
    <property type="project" value="InterPro"/>
</dbReference>
<dbReference type="InterPro" id="IPR050175">
    <property type="entry name" value="Complex_I_Subunit_2"/>
</dbReference>
<dbReference type="InterPro" id="IPR010933">
    <property type="entry name" value="NADH_DH_su2_C"/>
</dbReference>
<dbReference type="InterPro" id="IPR003917">
    <property type="entry name" value="NADH_UbQ_OxRdtase_chain2"/>
</dbReference>
<dbReference type="InterPro" id="IPR001750">
    <property type="entry name" value="ND/Mrp_TM"/>
</dbReference>
<dbReference type="PANTHER" id="PTHR46552">
    <property type="entry name" value="NADH-UBIQUINONE OXIDOREDUCTASE CHAIN 2"/>
    <property type="match status" value="1"/>
</dbReference>
<dbReference type="PANTHER" id="PTHR46552:SF1">
    <property type="entry name" value="NADH-UBIQUINONE OXIDOREDUCTASE CHAIN 2"/>
    <property type="match status" value="1"/>
</dbReference>
<dbReference type="Pfam" id="PF06444">
    <property type="entry name" value="NADH_dehy_S2_C"/>
    <property type="match status" value="1"/>
</dbReference>
<dbReference type="Pfam" id="PF00361">
    <property type="entry name" value="Proton_antipo_M"/>
    <property type="match status" value="1"/>
</dbReference>
<dbReference type="PRINTS" id="PR01436">
    <property type="entry name" value="NADHDHGNASE2"/>
</dbReference>
<feature type="chain" id="PRO_0000256661" description="NADH-ubiquinone oxidoreductase chain 2">
    <location>
        <begin position="1"/>
        <end position="347"/>
    </location>
</feature>
<feature type="transmembrane region" description="Helical" evidence="3">
    <location>
        <begin position="13"/>
        <end position="33"/>
    </location>
</feature>
<feature type="transmembrane region" description="Helical" evidence="3">
    <location>
        <begin position="59"/>
        <end position="79"/>
    </location>
</feature>
<feature type="transmembrane region" description="Helical" evidence="3">
    <location>
        <begin position="84"/>
        <end position="104"/>
    </location>
</feature>
<feature type="transmembrane region" description="Helical" evidence="3">
    <location>
        <begin position="111"/>
        <end position="131"/>
    </location>
</feature>
<feature type="transmembrane region" description="Helical" evidence="3">
    <location>
        <begin position="149"/>
        <end position="169"/>
    </location>
</feature>
<feature type="transmembrane region" description="Helical" evidence="3">
    <location>
        <begin position="178"/>
        <end position="198"/>
    </location>
</feature>
<feature type="transmembrane region" description="Helical" evidence="3">
    <location>
        <begin position="201"/>
        <end position="221"/>
    </location>
</feature>
<feature type="transmembrane region" description="Helical" evidence="3">
    <location>
        <begin position="240"/>
        <end position="260"/>
    </location>
</feature>
<feature type="transmembrane region" description="Helical" evidence="3">
    <location>
        <begin position="276"/>
        <end position="296"/>
    </location>
</feature>
<feature type="transmembrane region" description="Helical" evidence="3">
    <location>
        <begin position="326"/>
        <end position="346"/>
    </location>
</feature>
<gene>
    <name evidence="2" type="primary">MT-ND2</name>
    <name type="synonym">MTND2</name>
    <name type="synonym">NADH2</name>
    <name type="synonym">ND2</name>
</gene>
<name>NU2M_CHRAU</name>
<accession>Q330D8</accession>
<comment type="function">
    <text evidence="1">Core subunit of the mitochondrial membrane respiratory chain NADH dehydrogenase (Complex I) that is believed to belong to the minimal assembly required for catalysis. Complex I functions in the transfer of electrons from NADH to the respiratory chain. The immediate electron acceptor for the enzyme is believed to be ubiquinone (By similarity).</text>
</comment>
<comment type="catalytic activity">
    <reaction>
        <text>a ubiquinone + NADH + 5 H(+)(in) = a ubiquinol + NAD(+) + 4 H(+)(out)</text>
        <dbReference type="Rhea" id="RHEA:29091"/>
        <dbReference type="Rhea" id="RHEA-COMP:9565"/>
        <dbReference type="Rhea" id="RHEA-COMP:9566"/>
        <dbReference type="ChEBI" id="CHEBI:15378"/>
        <dbReference type="ChEBI" id="CHEBI:16389"/>
        <dbReference type="ChEBI" id="CHEBI:17976"/>
        <dbReference type="ChEBI" id="CHEBI:57540"/>
        <dbReference type="ChEBI" id="CHEBI:57945"/>
        <dbReference type="EC" id="7.1.1.2"/>
    </reaction>
</comment>
<comment type="subunit">
    <text evidence="2">Core subunit of respiratory chain NADH dehydrogenase (Complex I) which is composed of 45 different subunits. Interacts with TMEM242.</text>
</comment>
<comment type="subcellular location">
    <subcellularLocation>
        <location>Mitochondrion inner membrane</location>
        <topology>Multi-pass membrane protein</topology>
    </subcellularLocation>
</comment>
<comment type="similarity">
    <text evidence="4">Belongs to the complex I subunit 2 family.</text>
</comment>
<sequence length="347" mass="38379">MNPLTFTMITSTIILGTSIVITSSHWLTVWIGFEMNMLAIIPVLMKTHHPRSTEAATKYFLIQATASMLLMLAVTINLLSSGQWAVSNMIDPLALTIMTLALAMKLGLSPFHFWVPEVTQGVPLLSGLILLTWQKLAPLSILCTLSPNIDPTLILTMSILSVLVGGWGGLNQTQLRKIMAYSSISHMGWMTAILIYNPSLTILNLLLYIMMTSTTFILLIITSSTTTLSLSHTWNKTPLIAIIILTTMLSLGGLPPLTGFMPKWMILQDLTKNENIALSLFMAMAALLNLYFYTRLTYTTSLTMLPTTNNTKIKWHFKTTKQAASLSPLIIISTMILPLTPTMSALW</sequence>
<evidence type="ECO:0000250" key="1"/>
<evidence type="ECO:0000250" key="2">
    <source>
        <dbReference type="UniProtKB" id="P03891"/>
    </source>
</evidence>
<evidence type="ECO:0000255" key="3"/>
<evidence type="ECO:0000305" key="4"/>
<keyword id="KW-0249">Electron transport</keyword>
<keyword id="KW-0472">Membrane</keyword>
<keyword id="KW-0496">Mitochondrion</keyword>
<keyword id="KW-0999">Mitochondrion inner membrane</keyword>
<keyword id="KW-0520">NAD</keyword>
<keyword id="KW-0679">Respiratory chain</keyword>
<keyword id="KW-1278">Translocase</keyword>
<keyword id="KW-0812">Transmembrane</keyword>
<keyword id="KW-1133">Transmembrane helix</keyword>
<keyword id="KW-0813">Transport</keyword>
<keyword id="KW-0830">Ubiquinone</keyword>
<reference key="1">
    <citation type="submission" date="2003-12" db="EMBL/GenBank/DDBJ databases">
        <title>Bats and birds: flying in the face of mtDNA evolutionary rates.</title>
        <authorList>
            <person name="Worthington Wilmer J.M."/>
            <person name="Schneider C.J."/>
            <person name="Sorenson M.D."/>
        </authorList>
    </citation>
    <scope>NUCLEOTIDE SEQUENCE [GENOMIC DNA]</scope>
    <source>
        <strain>Isolate ET1</strain>
    </source>
</reference>
<protein>
    <recommendedName>
        <fullName evidence="2">NADH-ubiquinone oxidoreductase chain 2</fullName>
        <ecNumber>7.1.1.2</ecNumber>
    </recommendedName>
    <alternativeName>
        <fullName>NADH dehydrogenase subunit 2</fullName>
    </alternativeName>
</protein>
<geneLocation type="mitochondrion"/>